<comment type="function">
    <text evidence="1">Acts as a chaperone.</text>
</comment>
<comment type="induction">
    <text evidence="1">By stress conditions e.g. heat shock (By similarity).</text>
</comment>
<comment type="similarity">
    <text evidence="3">Belongs to the heat shock protein 70 family.</text>
</comment>
<accession>Q7U6R7</accession>
<evidence type="ECO:0000250" key="1"/>
<evidence type="ECO:0000256" key="2">
    <source>
        <dbReference type="SAM" id="MobiDB-lite"/>
    </source>
</evidence>
<evidence type="ECO:0000305" key="3"/>
<dbReference type="EMBL" id="BX569692">
    <property type="protein sequence ID" value="CAE07784.1"/>
    <property type="molecule type" value="Genomic_DNA"/>
</dbReference>
<dbReference type="RefSeq" id="WP_011128133.1">
    <property type="nucleotide sequence ID" value="NC_005070.1"/>
</dbReference>
<dbReference type="SMR" id="Q7U6R7"/>
<dbReference type="STRING" id="84588.SYNW1269"/>
<dbReference type="KEGG" id="syw:SYNW1269"/>
<dbReference type="eggNOG" id="COG0443">
    <property type="taxonomic scope" value="Bacteria"/>
</dbReference>
<dbReference type="HOGENOM" id="CLU_005965_2_1_3"/>
<dbReference type="Proteomes" id="UP000001422">
    <property type="component" value="Chromosome"/>
</dbReference>
<dbReference type="GO" id="GO:0005524">
    <property type="term" value="F:ATP binding"/>
    <property type="evidence" value="ECO:0007669"/>
    <property type="project" value="UniProtKB-UniRule"/>
</dbReference>
<dbReference type="GO" id="GO:0140662">
    <property type="term" value="F:ATP-dependent protein folding chaperone"/>
    <property type="evidence" value="ECO:0007669"/>
    <property type="project" value="InterPro"/>
</dbReference>
<dbReference type="GO" id="GO:0051082">
    <property type="term" value="F:unfolded protein binding"/>
    <property type="evidence" value="ECO:0007669"/>
    <property type="project" value="InterPro"/>
</dbReference>
<dbReference type="CDD" id="cd10234">
    <property type="entry name" value="ASKHA_NBD_HSP70_DnaK-like"/>
    <property type="match status" value="1"/>
</dbReference>
<dbReference type="FunFam" id="2.60.34.10:FF:000014">
    <property type="entry name" value="Chaperone protein DnaK HSP70"/>
    <property type="match status" value="1"/>
</dbReference>
<dbReference type="FunFam" id="3.30.420.40:FF:000004">
    <property type="entry name" value="Molecular chaperone DnaK"/>
    <property type="match status" value="1"/>
</dbReference>
<dbReference type="FunFam" id="3.90.640.10:FF:000003">
    <property type="entry name" value="Molecular chaperone DnaK"/>
    <property type="match status" value="1"/>
</dbReference>
<dbReference type="Gene3D" id="3.30.420.40">
    <property type="match status" value="2"/>
</dbReference>
<dbReference type="Gene3D" id="3.90.640.10">
    <property type="entry name" value="Actin, Chain A, domain 4"/>
    <property type="match status" value="1"/>
</dbReference>
<dbReference type="Gene3D" id="2.60.34.10">
    <property type="entry name" value="Substrate Binding Domain Of DNAk, Chain A, domain 1"/>
    <property type="match status" value="1"/>
</dbReference>
<dbReference type="HAMAP" id="MF_00332">
    <property type="entry name" value="DnaK"/>
    <property type="match status" value="1"/>
</dbReference>
<dbReference type="InterPro" id="IPR043129">
    <property type="entry name" value="ATPase_NBD"/>
</dbReference>
<dbReference type="InterPro" id="IPR012725">
    <property type="entry name" value="Chaperone_DnaK"/>
</dbReference>
<dbReference type="InterPro" id="IPR018181">
    <property type="entry name" value="Heat_shock_70_CS"/>
</dbReference>
<dbReference type="InterPro" id="IPR029047">
    <property type="entry name" value="HSP70_peptide-bd_sf"/>
</dbReference>
<dbReference type="InterPro" id="IPR013126">
    <property type="entry name" value="Hsp_70_fam"/>
</dbReference>
<dbReference type="NCBIfam" id="NF001413">
    <property type="entry name" value="PRK00290.1"/>
    <property type="match status" value="1"/>
</dbReference>
<dbReference type="NCBIfam" id="NF009946">
    <property type="entry name" value="PRK13410.1"/>
    <property type="match status" value="1"/>
</dbReference>
<dbReference type="NCBIfam" id="TIGR02350">
    <property type="entry name" value="prok_dnaK"/>
    <property type="match status" value="1"/>
</dbReference>
<dbReference type="PANTHER" id="PTHR19375">
    <property type="entry name" value="HEAT SHOCK PROTEIN 70KDA"/>
    <property type="match status" value="1"/>
</dbReference>
<dbReference type="Pfam" id="PF00012">
    <property type="entry name" value="HSP70"/>
    <property type="match status" value="1"/>
</dbReference>
<dbReference type="PRINTS" id="PR00301">
    <property type="entry name" value="HEATSHOCK70"/>
</dbReference>
<dbReference type="SUPFAM" id="SSF53067">
    <property type="entry name" value="Actin-like ATPase domain"/>
    <property type="match status" value="2"/>
</dbReference>
<dbReference type="SUPFAM" id="SSF100920">
    <property type="entry name" value="Heat shock protein 70kD (HSP70), peptide-binding domain"/>
    <property type="match status" value="1"/>
</dbReference>
<dbReference type="PROSITE" id="PS00297">
    <property type="entry name" value="HSP70_1"/>
    <property type="match status" value="1"/>
</dbReference>
<dbReference type="PROSITE" id="PS00329">
    <property type="entry name" value="HSP70_2"/>
    <property type="match status" value="1"/>
</dbReference>
<dbReference type="PROSITE" id="PS01036">
    <property type="entry name" value="HSP70_3"/>
    <property type="match status" value="1"/>
</dbReference>
<gene>
    <name type="primary">dnaK1</name>
    <name type="ordered locus">SYNW1269</name>
</gene>
<proteinExistence type="inferred from homology"/>
<sequence>MGRIVGIDLGTTNSVVAVLEAGRPHVIANAEGGRTTPSVVGYSKDQELLVGQLARRQLVLSPRNTFSNLKRFVGRDWEELEDSSLAVPYTVRANDRGQVRVPCPVTEREYAPEELVASIIRKLVDDASTYLGESVEAAVVTVPAYFNDAQRQATRDAGRLAGIAVERILNEPTAAALAYGFDRSAVRRVLVFDLGGGTFDVSLLRIANGVFDVKATNGDTQLGGNDFDQRIVDWIADAFQAEHGVDLRRDRQALQRLTEAAEKAKQELSGVLTTPISLPFIATGENGPLHVETNLDRSTFEGLCPDLLDRLLMPVQSALRDSGWAADDIDDVVLVGGATRMPMVQQLVRTLVPLDPCQSVNPDEVVAIGAAVQAGILTGELRDLLLNDVTPLSLGLETVGGLMRVLIPRNTPIPVRQSDVFSTSEPNQSSVEIHVWQGERQMASDNKSLGRFRLSGIPPAPRGVPQVQVAFDIDANGLLQVSATDRTTGRKQSVSIQGGSNLNEDEVTALLAEAEARADEDRRKRNQIERRNRAQTLVAQAERRLRDAALELGPYGAERQQRAVEMAMRDVQDCLAQDDLQELDLCLSGLEEALFGLNRRLSAERQSDGRPLQGLRNTLGSLKDELFADDWDDDPWAAPSGPPRGRSLNRRDRDPWDDDFYR</sequence>
<organism>
    <name type="scientific">Parasynechococcus marenigrum (strain WH8102)</name>
    <dbReference type="NCBI Taxonomy" id="84588"/>
    <lineage>
        <taxon>Bacteria</taxon>
        <taxon>Bacillati</taxon>
        <taxon>Cyanobacteriota</taxon>
        <taxon>Cyanophyceae</taxon>
        <taxon>Synechococcales</taxon>
        <taxon>Prochlorococcaceae</taxon>
        <taxon>Parasynechococcus</taxon>
        <taxon>Parasynechococcus marenigrum</taxon>
    </lineage>
</organism>
<reference key="1">
    <citation type="journal article" date="2003" name="Nature">
        <title>The genome of a motile marine Synechococcus.</title>
        <authorList>
            <person name="Palenik B."/>
            <person name="Brahamsha B."/>
            <person name="Larimer F.W."/>
            <person name="Land M.L."/>
            <person name="Hauser L."/>
            <person name="Chain P."/>
            <person name="Lamerdin J.E."/>
            <person name="Regala W."/>
            <person name="Allen E.E."/>
            <person name="McCarren J."/>
            <person name="Paulsen I.T."/>
            <person name="Dufresne A."/>
            <person name="Partensky F."/>
            <person name="Webb E.A."/>
            <person name="Waterbury J."/>
        </authorList>
    </citation>
    <scope>NUCLEOTIDE SEQUENCE [LARGE SCALE GENOMIC DNA]</scope>
    <source>
        <strain>WH8102</strain>
    </source>
</reference>
<name>DNAK1_PARMW</name>
<protein>
    <recommendedName>
        <fullName>Chaperone protein dnaK1</fullName>
    </recommendedName>
    <alternativeName>
        <fullName>HSP70-1</fullName>
    </alternativeName>
    <alternativeName>
        <fullName>Heat shock 70 kDa protein 1</fullName>
    </alternativeName>
    <alternativeName>
        <fullName>Heat shock protein 70-1</fullName>
    </alternativeName>
</protein>
<feature type="chain" id="PRO_0000078566" description="Chaperone protein dnaK1">
    <location>
        <begin position="1"/>
        <end position="662"/>
    </location>
</feature>
<feature type="region of interest" description="Disordered" evidence="2">
    <location>
        <begin position="630"/>
        <end position="662"/>
    </location>
</feature>
<feature type="compositionally biased region" description="Basic and acidic residues" evidence="2">
    <location>
        <begin position="649"/>
        <end position="662"/>
    </location>
</feature>
<feature type="modified residue" description="Phosphothreonine; by autocatalysis" evidence="1">
    <location>
        <position position="198"/>
    </location>
</feature>
<keyword id="KW-0067">ATP-binding</keyword>
<keyword id="KW-0143">Chaperone</keyword>
<keyword id="KW-0547">Nucleotide-binding</keyword>
<keyword id="KW-0597">Phosphoprotein</keyword>
<keyword id="KW-0346">Stress response</keyword>